<feature type="signal peptide">
    <location>
        <begin position="1"/>
        <end position="24"/>
    </location>
</feature>
<feature type="chain" id="PRO_0000023498" description="Pectinesterase A">
    <location>
        <begin position="25"/>
        <end position="366"/>
    </location>
</feature>
<feature type="active site" description="Proton donor">
    <location>
        <position position="178"/>
    </location>
</feature>
<feature type="active site" description="Nucleophile">
    <location>
        <position position="199"/>
    </location>
</feature>
<feature type="binding site" evidence="1">
    <location>
        <position position="109"/>
    </location>
    <ligand>
        <name>substrate</name>
    </ligand>
</feature>
<feature type="binding site" evidence="1">
    <location>
        <position position="153"/>
    </location>
    <ligand>
        <name>substrate</name>
    </ligand>
</feature>
<feature type="binding site" evidence="1">
    <location>
        <position position="219"/>
    </location>
    <ligand>
        <name>substrate</name>
    </ligand>
</feature>
<feature type="binding site" evidence="1">
    <location>
        <position position="226"/>
    </location>
    <ligand>
        <name>substrate</name>
    </ligand>
</feature>
<feature type="binding site" evidence="1">
    <location>
        <position position="230"/>
    </location>
    <ligand>
        <name>substrate</name>
    </ligand>
</feature>
<feature type="binding site" evidence="1">
    <location>
        <position position="267"/>
    </location>
    <ligand>
        <name>substrate</name>
    </ligand>
</feature>
<feature type="binding site" evidence="1">
    <location>
        <position position="269"/>
    </location>
    <ligand>
        <name>substrate</name>
    </ligand>
</feature>
<feature type="binding site" evidence="1">
    <location>
        <position position="272"/>
    </location>
    <ligand>
        <name>substrate</name>
    </ligand>
</feature>
<feature type="site" description="Transition state stabilizer" evidence="1">
    <location>
        <position position="177"/>
    </location>
</feature>
<feature type="disulfide bond">
    <location>
        <begin position="192"/>
        <end position="212"/>
    </location>
</feature>
<feature type="strand" evidence="3">
    <location>
        <begin position="29"/>
        <end position="32"/>
    </location>
</feature>
<feature type="strand" evidence="3">
    <location>
        <begin position="36"/>
        <end position="40"/>
    </location>
</feature>
<feature type="strand" evidence="3">
    <location>
        <begin position="42"/>
        <end position="44"/>
    </location>
</feature>
<feature type="helix" evidence="3">
    <location>
        <begin position="45"/>
        <end position="50"/>
    </location>
</feature>
<feature type="strand" evidence="3">
    <location>
        <begin position="54"/>
        <end position="57"/>
    </location>
</feature>
<feature type="strand" evidence="3">
    <location>
        <begin position="59"/>
        <end position="63"/>
    </location>
</feature>
<feature type="strand" evidence="3">
    <location>
        <begin position="65"/>
        <end position="68"/>
    </location>
</feature>
<feature type="strand" evidence="3">
    <location>
        <begin position="72"/>
        <end position="74"/>
    </location>
</feature>
<feature type="strand" evidence="3">
    <location>
        <begin position="79"/>
        <end position="84"/>
    </location>
</feature>
<feature type="turn" evidence="3">
    <location>
        <begin position="86"/>
        <end position="88"/>
    </location>
</feature>
<feature type="strand" evidence="3">
    <location>
        <begin position="89"/>
        <end position="93"/>
    </location>
</feature>
<feature type="helix" evidence="3">
    <location>
        <begin position="108"/>
        <end position="111"/>
    </location>
</feature>
<feature type="strand" evidence="3">
    <location>
        <begin position="114"/>
        <end position="117"/>
    </location>
</feature>
<feature type="strand" evidence="3">
    <location>
        <begin position="119"/>
        <end position="121"/>
    </location>
</feature>
<feature type="strand" evidence="3">
    <location>
        <begin position="123"/>
        <end position="131"/>
    </location>
</feature>
<feature type="helix" evidence="3">
    <location>
        <begin position="135"/>
        <end position="139"/>
    </location>
</feature>
<feature type="strand" evidence="3">
    <location>
        <begin position="156"/>
        <end position="159"/>
    </location>
</feature>
<feature type="strand" evidence="3">
    <location>
        <begin position="165"/>
        <end position="174"/>
    </location>
</feature>
<feature type="strand" evidence="3">
    <location>
        <begin position="180"/>
        <end position="182"/>
    </location>
</feature>
<feature type="strand" evidence="3">
    <location>
        <begin position="184"/>
        <end position="191"/>
    </location>
</feature>
<feature type="strand" evidence="3">
    <location>
        <begin position="193"/>
        <end position="211"/>
    </location>
</feature>
<feature type="strand" evidence="3">
    <location>
        <begin position="213"/>
        <end position="216"/>
    </location>
</feature>
<feature type="strand" evidence="3">
    <location>
        <begin position="229"/>
        <end position="234"/>
    </location>
</feature>
<feature type="strand" evidence="3">
    <location>
        <begin position="244"/>
        <end position="248"/>
    </location>
</feature>
<feature type="strand" evidence="3">
    <location>
        <begin position="250"/>
        <end position="255"/>
    </location>
</feature>
<feature type="strand" evidence="3">
    <location>
        <begin position="263"/>
        <end position="266"/>
    </location>
</feature>
<feature type="strand" evidence="3">
    <location>
        <begin position="272"/>
        <end position="275"/>
    </location>
</feature>
<feature type="strand" evidence="3">
    <location>
        <begin position="278"/>
        <end position="281"/>
    </location>
</feature>
<feature type="strand" evidence="3">
    <location>
        <begin position="288"/>
        <end position="293"/>
    </location>
</feature>
<feature type="strand" evidence="3">
    <location>
        <begin position="300"/>
        <end position="302"/>
    </location>
</feature>
<feature type="strand" evidence="3">
    <location>
        <begin position="306"/>
        <end position="309"/>
    </location>
</feature>
<feature type="strand" evidence="3">
    <location>
        <begin position="315"/>
        <end position="318"/>
    </location>
</feature>
<feature type="helix" evidence="3">
    <location>
        <begin position="320"/>
        <end position="322"/>
    </location>
</feature>
<feature type="strand" evidence="3">
    <location>
        <begin position="323"/>
        <end position="329"/>
    </location>
</feature>
<feature type="strand" evidence="3">
    <location>
        <begin position="337"/>
        <end position="341"/>
    </location>
</feature>
<feature type="helix" evidence="3">
    <location>
        <begin position="346"/>
        <end position="349"/>
    </location>
</feature>
<feature type="helix" evidence="3">
    <location>
        <begin position="350"/>
        <end position="352"/>
    </location>
</feature>
<feature type="helix" evidence="3">
    <location>
        <begin position="354"/>
        <end position="358"/>
    </location>
</feature>
<comment type="function">
    <text evidence="1">Involved in maceration and soft-rotting of plant tissue.</text>
</comment>
<comment type="catalytic activity">
    <reaction>
        <text>[(1-&gt;4)-alpha-D-galacturonosyl methyl ester](n) + n H2O = [(1-&gt;4)-alpha-D-galacturonosyl](n) + n methanol + n H(+)</text>
        <dbReference type="Rhea" id="RHEA:22380"/>
        <dbReference type="Rhea" id="RHEA-COMP:14570"/>
        <dbReference type="Rhea" id="RHEA-COMP:14573"/>
        <dbReference type="ChEBI" id="CHEBI:15377"/>
        <dbReference type="ChEBI" id="CHEBI:15378"/>
        <dbReference type="ChEBI" id="CHEBI:17790"/>
        <dbReference type="ChEBI" id="CHEBI:140522"/>
        <dbReference type="ChEBI" id="CHEBI:140523"/>
        <dbReference type="EC" id="3.1.1.11"/>
    </reaction>
</comment>
<comment type="pathway">
    <text>Glycan metabolism; pectin degradation; 2-dehydro-3-deoxy-D-gluconate from pectin: step 1/5.</text>
</comment>
<comment type="subunit">
    <text evidence="1">Monomer.</text>
</comment>
<comment type="subcellular location">
    <subcellularLocation>
        <location evidence="1">Secreted</location>
    </subcellularLocation>
</comment>
<comment type="similarity">
    <text evidence="2">Belongs to the pectinesterase family.</text>
</comment>
<organism>
    <name type="scientific">Dickeya chrysanthemi</name>
    <name type="common">Pectobacterium chrysanthemi</name>
    <name type="synonym">Erwinia chrysanthemi</name>
    <dbReference type="NCBI Taxonomy" id="556"/>
    <lineage>
        <taxon>Bacteria</taxon>
        <taxon>Pseudomonadati</taxon>
        <taxon>Pseudomonadota</taxon>
        <taxon>Gammaproteobacteria</taxon>
        <taxon>Enterobacterales</taxon>
        <taxon>Pectobacteriaceae</taxon>
        <taxon>Dickeya</taxon>
    </lineage>
</organism>
<accession>P0C1A8</accession>
<accession>P07863</accession>
<dbReference type="EC" id="3.1.1.11"/>
<dbReference type="EMBL" id="Y00549">
    <property type="protein sequence ID" value="CAA68628.1"/>
    <property type="molecule type" value="Genomic_DNA"/>
</dbReference>
<dbReference type="PIR" id="S03770">
    <property type="entry name" value="S03770"/>
</dbReference>
<dbReference type="PDB" id="1QJV">
    <property type="method" value="X-ray"/>
    <property type="resolution" value="2.37 A"/>
    <property type="chains" value="A/B=25-366"/>
</dbReference>
<dbReference type="PDBsum" id="1QJV"/>
<dbReference type="SMR" id="P0C1A8"/>
<dbReference type="BRENDA" id="3.1.1.11">
    <property type="organism ID" value="2141"/>
</dbReference>
<dbReference type="SABIO-RK" id="P0C1A8"/>
<dbReference type="UniPathway" id="UPA00545">
    <property type="reaction ID" value="UER00823"/>
</dbReference>
<dbReference type="EvolutionaryTrace" id="P0C1A8"/>
<dbReference type="GO" id="GO:0009279">
    <property type="term" value="C:cell outer membrane"/>
    <property type="evidence" value="ECO:0007669"/>
    <property type="project" value="TreeGrafter"/>
</dbReference>
<dbReference type="GO" id="GO:0005576">
    <property type="term" value="C:extracellular region"/>
    <property type="evidence" value="ECO:0007669"/>
    <property type="project" value="UniProtKB-SubCell"/>
</dbReference>
<dbReference type="GO" id="GO:0030599">
    <property type="term" value="F:pectinesterase activity"/>
    <property type="evidence" value="ECO:0007669"/>
    <property type="project" value="UniProtKB-EC"/>
</dbReference>
<dbReference type="GO" id="GO:0042545">
    <property type="term" value="P:cell wall modification"/>
    <property type="evidence" value="ECO:0007669"/>
    <property type="project" value="InterPro"/>
</dbReference>
<dbReference type="GO" id="GO:0045490">
    <property type="term" value="P:pectin catabolic process"/>
    <property type="evidence" value="ECO:0007669"/>
    <property type="project" value="UniProtKB-UniPathway"/>
</dbReference>
<dbReference type="Gene3D" id="2.160.20.10">
    <property type="entry name" value="Single-stranded right-handed beta-helix, Pectin lyase-like"/>
    <property type="match status" value="1"/>
</dbReference>
<dbReference type="InterPro" id="IPR012334">
    <property type="entry name" value="Pectin_lyas_fold"/>
</dbReference>
<dbReference type="InterPro" id="IPR011050">
    <property type="entry name" value="Pectin_lyase_fold/virulence"/>
</dbReference>
<dbReference type="InterPro" id="IPR053505">
    <property type="entry name" value="Pectinesterase"/>
</dbReference>
<dbReference type="InterPro" id="IPR033131">
    <property type="entry name" value="Pectinesterase_Asp_AS"/>
</dbReference>
<dbReference type="InterPro" id="IPR000070">
    <property type="entry name" value="Pectinesterase_cat"/>
</dbReference>
<dbReference type="NCBIfam" id="NF041896">
    <property type="entry name" value="pecestase_PemA"/>
    <property type="match status" value="1"/>
</dbReference>
<dbReference type="PANTHER" id="PTHR31321">
    <property type="entry name" value="ACYL-COA THIOESTER HYDROLASE YBHC-RELATED"/>
    <property type="match status" value="1"/>
</dbReference>
<dbReference type="PANTHER" id="PTHR31321:SF57">
    <property type="entry name" value="PECTINESTERASE 53-RELATED"/>
    <property type="match status" value="1"/>
</dbReference>
<dbReference type="Pfam" id="PF01095">
    <property type="entry name" value="Pectinesterase"/>
    <property type="match status" value="1"/>
</dbReference>
<dbReference type="SUPFAM" id="SSF51126">
    <property type="entry name" value="Pectin lyase-like"/>
    <property type="match status" value="1"/>
</dbReference>
<dbReference type="PROSITE" id="PS00503">
    <property type="entry name" value="PECTINESTERASE_2"/>
    <property type="match status" value="1"/>
</dbReference>
<protein>
    <recommendedName>
        <fullName>Pectinesterase A</fullName>
        <shortName>PE A</shortName>
        <ecNumber>3.1.1.11</ecNumber>
    </recommendedName>
    <alternativeName>
        <fullName>Pectin methylesterase A</fullName>
    </alternativeName>
</protein>
<sequence length="366" mass="39319">MLKTISGTLALSLIIAASVHQAQAATTYNAVVSKSSSDGKTFKTIADAIASAPAGSTPFVILIKNGVYNERLTITRNNLLLKGESRNGAVIAAATAAGTLKSDGSKWGTAGSSTITISAKDFSAQSLTIRNDFDFPANQAKSDSDSSKIKDTQAVALYVTKSGDRAYFKDVSLVGYQDTLYVSGGRSFFSDCRISGTVDFIFGDGTALFNNCDLVSRYRADVKSGNVSGYLTAPSTNINQKYGLVITNSRVIRESDSVPAKSYGLGRPWHPTTTFSDGRYADPNAIGQTVFLNTSMDNHIYGWDKMSGKDKNGNTIWFNPEDSRFFEYKSYGAGAAVSKDRRQLTDAQAAEYTQSKVLGDWTPTLP</sequence>
<proteinExistence type="evidence at protein level"/>
<gene>
    <name type="primary">pemA</name>
    <name type="synonym">pem</name>
</gene>
<evidence type="ECO:0000250" key="1"/>
<evidence type="ECO:0000305" key="2"/>
<evidence type="ECO:0007829" key="3">
    <source>
        <dbReference type="PDB" id="1QJV"/>
    </source>
</evidence>
<name>PMEA_DICCH</name>
<keyword id="KW-0002">3D-structure</keyword>
<keyword id="KW-0063">Aspartyl esterase</keyword>
<keyword id="KW-0961">Cell wall biogenesis/degradation</keyword>
<keyword id="KW-1015">Disulfide bond</keyword>
<keyword id="KW-0378">Hydrolase</keyword>
<keyword id="KW-0964">Secreted</keyword>
<keyword id="KW-0732">Signal</keyword>
<reference key="1">
    <citation type="journal article" date="1988" name="Mol. Microbiol.">
        <title>Molecular cloning and nucleotide sequence of the pectin methyl esterase gene of Erwinia chrysanthemi B374.</title>
        <authorList>
            <person name="Plastow G.S."/>
        </authorList>
    </citation>
    <scope>NUCLEOTIDE SEQUENCE [GENOMIC DNA]</scope>
    <source>
        <strain>B374</strain>
    </source>
</reference>
<reference key="2">
    <citation type="journal article" date="2001" name="J. Mol. Biol.">
        <title>Three-dimensional structure of Erwinia chrysanthemi pectin methylesterase reveals a novel esterase active site.</title>
        <authorList>
            <person name="Jenkins J."/>
            <person name="Mayans O."/>
            <person name="Smith D."/>
            <person name="Worboys K."/>
            <person name="Pickersgill R.W."/>
        </authorList>
    </citation>
    <scope>X-RAY CRYSTALLOGRAPHY (2.37 ANGSTROMS) OF 25-366</scope>
    <source>
        <strain>B374</strain>
    </source>
</reference>